<reference key="1">
    <citation type="journal article" date="2010" name="Genomics">
        <title>Porcine KLF gene family: Structure, mapping, and phylogenetic analysis.</title>
        <authorList>
            <person name="Chen Z."/>
            <person name="Lei T."/>
            <person name="Chen X."/>
            <person name="Zhang J."/>
            <person name="Yu A."/>
            <person name="Long Q."/>
            <person name="Long H."/>
            <person name="Jin D."/>
            <person name="Gan L."/>
            <person name="Yang Z."/>
        </authorList>
    </citation>
    <scope>NUCLEOTIDE SEQUENCE [MRNA]</scope>
</reference>
<accession>C7EMF5</accession>
<evidence type="ECO:0000250" key="1"/>
<evidence type="ECO:0000255" key="2">
    <source>
        <dbReference type="PROSITE-ProRule" id="PRU00042"/>
    </source>
</evidence>
<evidence type="ECO:0000256" key="3">
    <source>
        <dbReference type="SAM" id="MobiDB-lite"/>
    </source>
</evidence>
<evidence type="ECO:0000305" key="4"/>
<comment type="function">
    <text evidence="1">Transcription repressor that binds to the promoter of target genes and prevents their expression. Acts as a negative regulator of epithelial-mesenchymal transition and metastasis in breast cancer. Specifically binds the 5'-CACCC-3' sequence in the promoter of ID1, a key metastasis regulator in breast cancer, and repress its expression. May be a germ cell-specific transcription factor that plays important roles in spermatid differentiation and oocyte development (By similarity).</text>
</comment>
<comment type="subcellular location">
    <subcellularLocation>
        <location evidence="4">Nucleus</location>
    </subcellularLocation>
</comment>
<comment type="similarity">
    <text evidence="4">Belongs to the Sp1 C2H2-type zinc-finger protein family.</text>
</comment>
<protein>
    <recommendedName>
        <fullName>Krueppel-like factor 17</fullName>
    </recommendedName>
</protein>
<keyword id="KW-0010">Activator</keyword>
<keyword id="KW-0238">DNA-binding</keyword>
<keyword id="KW-0479">Metal-binding</keyword>
<keyword id="KW-0539">Nucleus</keyword>
<keyword id="KW-1185">Reference proteome</keyword>
<keyword id="KW-0677">Repeat</keyword>
<keyword id="KW-0678">Repressor</keyword>
<keyword id="KW-0804">Transcription</keyword>
<keyword id="KW-0805">Transcription regulation</keyword>
<keyword id="KW-0862">Zinc</keyword>
<keyword id="KW-0863">Zinc-finger</keyword>
<dbReference type="EMBL" id="GQ274323">
    <property type="protein sequence ID" value="ACT56537.1"/>
    <property type="molecule type" value="mRNA"/>
</dbReference>
<dbReference type="RefSeq" id="NP_001157482.1">
    <property type="nucleotide sequence ID" value="NM_001164010.2"/>
</dbReference>
<dbReference type="SMR" id="C7EMF5"/>
<dbReference type="FunCoup" id="C7EMF5">
    <property type="interactions" value="30"/>
</dbReference>
<dbReference type="STRING" id="9823.ENSSSCP00000021547"/>
<dbReference type="PaxDb" id="9823-ENSSSCP00000021547"/>
<dbReference type="Ensembl" id="ENSSSCT00000029287.2">
    <property type="protein sequence ID" value="ENSSSCP00000021547.2"/>
    <property type="gene ID" value="ENSSSCG00000024191.4"/>
</dbReference>
<dbReference type="Ensembl" id="ENSSSCT00025101948.1">
    <property type="protein sequence ID" value="ENSSSCP00025045072.1"/>
    <property type="gene ID" value="ENSSSCG00025074015.1"/>
</dbReference>
<dbReference type="Ensembl" id="ENSSSCT00035029844.1">
    <property type="protein sequence ID" value="ENSSSCP00035011565.1"/>
    <property type="gene ID" value="ENSSSCG00035022829.1"/>
</dbReference>
<dbReference type="Ensembl" id="ENSSSCT00055008930.1">
    <property type="protein sequence ID" value="ENSSSCP00055007072.1"/>
    <property type="gene ID" value="ENSSSCG00055004528.1"/>
</dbReference>
<dbReference type="Ensembl" id="ENSSSCT00065065226.1">
    <property type="protein sequence ID" value="ENSSSCP00065028266.1"/>
    <property type="gene ID" value="ENSSSCG00065047666.1"/>
</dbReference>
<dbReference type="Ensembl" id="ENSSSCT00090037479">
    <property type="protein sequence ID" value="ENSSSCP00090023314"/>
    <property type="gene ID" value="ENSSSCG00090021154"/>
</dbReference>
<dbReference type="Ensembl" id="ENSSSCT00105039891">
    <property type="protein sequence ID" value="ENSSSCP00105027679"/>
    <property type="gene ID" value="ENSSSCG00105020950"/>
</dbReference>
<dbReference type="Ensembl" id="ENSSSCT00110067407">
    <property type="protein sequence ID" value="ENSSSCP00110047619"/>
    <property type="gene ID" value="ENSSSCG00110035400"/>
</dbReference>
<dbReference type="Ensembl" id="ENSSSCT00130016279">
    <property type="protein sequence ID" value="ENSSSCP00130010974"/>
    <property type="gene ID" value="ENSSSCG00130008829"/>
</dbReference>
<dbReference type="GeneID" id="100302639"/>
<dbReference type="KEGG" id="ssc:100302639"/>
<dbReference type="CTD" id="128209"/>
<dbReference type="eggNOG" id="KOG1721">
    <property type="taxonomic scope" value="Eukaryota"/>
</dbReference>
<dbReference type="GeneTree" id="ENSGT00940000162020"/>
<dbReference type="HOGENOM" id="CLU_827795_0_0_1"/>
<dbReference type="InParanoid" id="C7EMF5"/>
<dbReference type="OMA" id="MMPLGEP"/>
<dbReference type="OrthoDB" id="6077919at2759"/>
<dbReference type="Proteomes" id="UP000008227">
    <property type="component" value="Chromosome 6"/>
</dbReference>
<dbReference type="Proteomes" id="UP000314985">
    <property type="component" value="Unplaced"/>
</dbReference>
<dbReference type="Proteomes" id="UP000694570">
    <property type="component" value="Unplaced"/>
</dbReference>
<dbReference type="Proteomes" id="UP000694571">
    <property type="component" value="Unplaced"/>
</dbReference>
<dbReference type="Proteomes" id="UP000694720">
    <property type="component" value="Unplaced"/>
</dbReference>
<dbReference type="Proteomes" id="UP000694722">
    <property type="component" value="Unplaced"/>
</dbReference>
<dbReference type="Proteomes" id="UP000694723">
    <property type="component" value="Unplaced"/>
</dbReference>
<dbReference type="Proteomes" id="UP000694724">
    <property type="component" value="Unplaced"/>
</dbReference>
<dbReference type="Proteomes" id="UP000694725">
    <property type="component" value="Unplaced"/>
</dbReference>
<dbReference type="Proteomes" id="UP000694726">
    <property type="component" value="Unplaced"/>
</dbReference>
<dbReference type="Proteomes" id="UP000694727">
    <property type="component" value="Unplaced"/>
</dbReference>
<dbReference type="Proteomes" id="UP000694728">
    <property type="component" value="Unplaced"/>
</dbReference>
<dbReference type="Bgee" id="ENSSSCG00000024191">
    <property type="expression patterns" value="Expressed in testis and 2 other cell types or tissues"/>
</dbReference>
<dbReference type="ExpressionAtlas" id="C7EMF5">
    <property type="expression patterns" value="baseline"/>
</dbReference>
<dbReference type="GO" id="GO:0005634">
    <property type="term" value="C:nucleus"/>
    <property type="evidence" value="ECO:0007669"/>
    <property type="project" value="UniProtKB-SubCell"/>
</dbReference>
<dbReference type="GO" id="GO:0003700">
    <property type="term" value="F:DNA-binding transcription factor activity"/>
    <property type="evidence" value="ECO:0000250"/>
    <property type="project" value="UniProtKB"/>
</dbReference>
<dbReference type="GO" id="GO:0000981">
    <property type="term" value="F:DNA-binding transcription factor activity, RNA polymerase II-specific"/>
    <property type="evidence" value="ECO:0000318"/>
    <property type="project" value="GO_Central"/>
</dbReference>
<dbReference type="GO" id="GO:0000978">
    <property type="term" value="F:RNA polymerase II cis-regulatory region sequence-specific DNA binding"/>
    <property type="evidence" value="ECO:0000318"/>
    <property type="project" value="GO_Central"/>
</dbReference>
<dbReference type="GO" id="GO:0000976">
    <property type="term" value="F:transcription cis-regulatory region binding"/>
    <property type="evidence" value="ECO:0000250"/>
    <property type="project" value="UniProtKB"/>
</dbReference>
<dbReference type="GO" id="GO:0008270">
    <property type="term" value="F:zinc ion binding"/>
    <property type="evidence" value="ECO:0007669"/>
    <property type="project" value="UniProtKB-KW"/>
</dbReference>
<dbReference type="GO" id="GO:0006357">
    <property type="term" value="P:regulation of transcription by RNA polymerase II"/>
    <property type="evidence" value="ECO:0000250"/>
    <property type="project" value="UniProtKB"/>
</dbReference>
<dbReference type="CDD" id="cd21574">
    <property type="entry name" value="KLF17_N"/>
    <property type="match status" value="1"/>
</dbReference>
<dbReference type="FunFam" id="3.30.160.60:FF:001977">
    <property type="entry name" value="Krueppel-like factor 17"/>
    <property type="match status" value="1"/>
</dbReference>
<dbReference type="FunFam" id="3.30.160.60:FF:002051">
    <property type="entry name" value="Krueppel-like factor 17"/>
    <property type="match status" value="1"/>
</dbReference>
<dbReference type="FunFam" id="3.30.160.60:FF:000125">
    <property type="entry name" value="Putative zinc finger protein 143"/>
    <property type="match status" value="1"/>
</dbReference>
<dbReference type="Gene3D" id="3.30.160.60">
    <property type="entry name" value="Classic Zinc Finger"/>
    <property type="match status" value="3"/>
</dbReference>
<dbReference type="InterPro" id="IPR036236">
    <property type="entry name" value="Znf_C2H2_sf"/>
</dbReference>
<dbReference type="InterPro" id="IPR013087">
    <property type="entry name" value="Znf_C2H2_type"/>
</dbReference>
<dbReference type="PANTHER" id="PTHR23235:SF159">
    <property type="entry name" value="KRUEPPEL-LIKE FACTOR 17"/>
    <property type="match status" value="1"/>
</dbReference>
<dbReference type="PANTHER" id="PTHR23235">
    <property type="entry name" value="KRUEPPEL-LIKE TRANSCRIPTION FACTOR"/>
    <property type="match status" value="1"/>
</dbReference>
<dbReference type="Pfam" id="PF00096">
    <property type="entry name" value="zf-C2H2"/>
    <property type="match status" value="2"/>
</dbReference>
<dbReference type="SMART" id="SM00355">
    <property type="entry name" value="ZnF_C2H2"/>
    <property type="match status" value="3"/>
</dbReference>
<dbReference type="SUPFAM" id="SSF57667">
    <property type="entry name" value="beta-beta-alpha zinc fingers"/>
    <property type="match status" value="2"/>
</dbReference>
<dbReference type="PROSITE" id="PS00028">
    <property type="entry name" value="ZINC_FINGER_C2H2_1"/>
    <property type="match status" value="3"/>
</dbReference>
<dbReference type="PROSITE" id="PS50157">
    <property type="entry name" value="ZINC_FINGER_C2H2_2"/>
    <property type="match status" value="3"/>
</dbReference>
<feature type="chain" id="PRO_0000390461" description="Krueppel-like factor 17">
    <location>
        <begin position="1"/>
        <end position="387"/>
    </location>
</feature>
<feature type="zinc finger region" description="C2H2-type 1" evidence="2">
    <location>
        <begin position="280"/>
        <end position="304"/>
    </location>
</feature>
<feature type="zinc finger region" description="C2H2-type 2" evidence="2">
    <location>
        <begin position="310"/>
        <end position="334"/>
    </location>
</feature>
<feature type="zinc finger region" description="C2H2-type 3" evidence="2">
    <location>
        <begin position="340"/>
        <end position="362"/>
    </location>
</feature>
<feature type="region of interest" description="Disordered" evidence="3">
    <location>
        <begin position="28"/>
        <end position="54"/>
    </location>
</feature>
<feature type="region of interest" description="Disordered" evidence="3">
    <location>
        <begin position="213"/>
        <end position="234"/>
    </location>
</feature>
<feature type="region of interest" description="Disordered" evidence="3">
    <location>
        <begin position="257"/>
        <end position="277"/>
    </location>
</feature>
<feature type="region of interest" description="Disordered" evidence="3">
    <location>
        <begin position="357"/>
        <end position="387"/>
    </location>
</feature>
<feature type="compositionally biased region" description="Polar residues" evidence="3">
    <location>
        <begin position="30"/>
        <end position="46"/>
    </location>
</feature>
<feature type="compositionally biased region" description="Basic and acidic residues" evidence="3">
    <location>
        <begin position="257"/>
        <end position="270"/>
    </location>
</feature>
<sequence>MEQGAEGLSQWPVAPHQFTEDTEKSLSFLDMSSSPGSGGVHTSWNRGPSGIRRVPQCPELERMSLASAQAPRQSACEMGQQFSMSPPEHGLSYCPQMTFTASQMVYSQGMSPSQPGMGAFKGAQAMPLGEPSISSVAVTFSGNLRMPPSGLPVSPPSGIPLMSHIGMPTMPYSGLPTVPFNGDALTPNMFLDPTMPPTEVQAVLPSLAQMLPSRDPQDFAMPPAGSPSLLPLESQGSFLSQPVSQEDFPKHHLCEPRREAQNSRAQERASGRSSPVSRPYHCEYENCGKAYTKRSHLVSHQRKHTGERPYKCTWEACTWSFFRSDELGRHTRIHTRYRPHKCDQCGRQFMRSDHLRQHQRTHMRMPRSPDPQADSGRRAGPLPAPHL</sequence>
<name>KLF17_PIG</name>
<gene>
    <name type="primary">KLF17</name>
</gene>
<organism>
    <name type="scientific">Sus scrofa</name>
    <name type="common">Pig</name>
    <dbReference type="NCBI Taxonomy" id="9823"/>
    <lineage>
        <taxon>Eukaryota</taxon>
        <taxon>Metazoa</taxon>
        <taxon>Chordata</taxon>
        <taxon>Craniata</taxon>
        <taxon>Vertebrata</taxon>
        <taxon>Euteleostomi</taxon>
        <taxon>Mammalia</taxon>
        <taxon>Eutheria</taxon>
        <taxon>Laurasiatheria</taxon>
        <taxon>Artiodactyla</taxon>
        <taxon>Suina</taxon>
        <taxon>Suidae</taxon>
        <taxon>Sus</taxon>
    </lineage>
</organism>
<proteinExistence type="evidence at transcript level"/>